<evidence type="ECO:0000255" key="1">
    <source>
        <dbReference type="HAMAP-Rule" id="MF_00016"/>
    </source>
</evidence>
<comment type="function">
    <text evidence="1">The RuvA-RuvB-RuvC complex processes Holliday junction (HJ) DNA during genetic recombination and DNA repair, while the RuvA-RuvB complex plays an important role in the rescue of blocked DNA replication forks via replication fork reversal (RFR). RuvA specifically binds to HJ cruciform DNA, conferring on it an open structure. The RuvB hexamer acts as an ATP-dependent pump, pulling dsDNA into and through the RuvAB complex. RuvB forms 2 homohexamers on either side of HJ DNA bound by 1 or 2 RuvA tetramers; 4 subunits per hexamer contact DNA at a time. Coordinated motions by a converter formed by DNA-disengaged RuvB subunits stimulates ATP hydrolysis and nucleotide exchange. Immobilization of the converter enables RuvB to convert the ATP-contained energy into a lever motion, pulling 2 nucleotides of DNA out of the RuvA tetramer per ATP hydrolyzed, thus driving DNA branch migration. The RuvB motors rotate together with the DNA substrate, which together with the progressing nucleotide cycle form the mechanistic basis for DNA recombination by continuous HJ branch migration. Branch migration allows RuvC to scan DNA until it finds its consensus sequence, where it cleaves and resolves cruciform DNA.</text>
</comment>
<comment type="catalytic activity">
    <reaction evidence="1">
        <text>ATP + H2O = ADP + phosphate + H(+)</text>
        <dbReference type="Rhea" id="RHEA:13065"/>
        <dbReference type="ChEBI" id="CHEBI:15377"/>
        <dbReference type="ChEBI" id="CHEBI:15378"/>
        <dbReference type="ChEBI" id="CHEBI:30616"/>
        <dbReference type="ChEBI" id="CHEBI:43474"/>
        <dbReference type="ChEBI" id="CHEBI:456216"/>
    </reaction>
</comment>
<comment type="subunit">
    <text evidence="1">Homohexamer. Forms an RuvA(8)-RuvB(12)-Holliday junction (HJ) complex. HJ DNA is sandwiched between 2 RuvA tetramers; dsDNA enters through RuvA and exits via RuvB. An RuvB hexamer assembles on each DNA strand where it exits the tetramer. Each RuvB hexamer is contacted by two RuvA subunits (via domain III) on 2 adjacent RuvB subunits; this complex drives branch migration. In the full resolvosome a probable DNA-RuvA(4)-RuvB(12)-RuvC(2) complex forms which resolves the HJ.</text>
</comment>
<comment type="subcellular location">
    <subcellularLocation>
        <location evidence="1">Cytoplasm</location>
    </subcellularLocation>
</comment>
<comment type="domain">
    <text evidence="1">Has 3 domains, the large (RuvB-L) and small ATPase (RuvB-S) domains and the C-terminal head (RuvB-H) domain. The head domain binds DNA, while the ATPase domains jointly bind ATP, ADP or are empty depending on the state of the subunit in the translocation cycle. During a single DNA translocation step the structure of each domain remains the same, but their relative positions change.</text>
</comment>
<comment type="similarity">
    <text evidence="1">Belongs to the RuvB family.</text>
</comment>
<reference key="1">
    <citation type="journal article" date="2001" name="Proc. Natl. Acad. Sci. U.S.A.">
        <title>Genome sequence of an industrial microorganism Streptomyces avermitilis: deducing the ability of producing secondary metabolites.</title>
        <authorList>
            <person name="Omura S."/>
            <person name="Ikeda H."/>
            <person name="Ishikawa J."/>
            <person name="Hanamoto A."/>
            <person name="Takahashi C."/>
            <person name="Shinose M."/>
            <person name="Takahashi Y."/>
            <person name="Horikawa H."/>
            <person name="Nakazawa H."/>
            <person name="Osonoe T."/>
            <person name="Kikuchi H."/>
            <person name="Shiba T."/>
            <person name="Sakaki Y."/>
            <person name="Hattori M."/>
        </authorList>
    </citation>
    <scope>NUCLEOTIDE SEQUENCE [LARGE SCALE GENOMIC DNA]</scope>
    <source>
        <strain>ATCC 31267 / DSM 46492 / JCM 5070 / NBRC 14893 / NCIMB 12804 / NRRL 8165 / MA-4680</strain>
    </source>
</reference>
<reference key="2">
    <citation type="journal article" date="2003" name="Nat. Biotechnol.">
        <title>Complete genome sequence and comparative analysis of the industrial microorganism Streptomyces avermitilis.</title>
        <authorList>
            <person name="Ikeda H."/>
            <person name="Ishikawa J."/>
            <person name="Hanamoto A."/>
            <person name="Shinose M."/>
            <person name="Kikuchi H."/>
            <person name="Shiba T."/>
            <person name="Sakaki Y."/>
            <person name="Hattori M."/>
            <person name="Omura S."/>
        </authorList>
    </citation>
    <scope>NUCLEOTIDE SEQUENCE [LARGE SCALE GENOMIC DNA]</scope>
    <source>
        <strain>ATCC 31267 / DSM 46492 / JCM 5070 / NBRC 14893 / NCIMB 12804 / NRRL 8165 / MA-4680</strain>
    </source>
</reference>
<gene>
    <name evidence="1" type="primary">ruvB</name>
    <name type="ordered locus">SAV_6835</name>
</gene>
<accession>Q820F3</accession>
<name>RUVB_STRAW</name>
<organism>
    <name type="scientific">Streptomyces avermitilis (strain ATCC 31267 / DSM 46492 / JCM 5070 / NBRC 14893 / NCIMB 12804 / NRRL 8165 / MA-4680)</name>
    <dbReference type="NCBI Taxonomy" id="227882"/>
    <lineage>
        <taxon>Bacteria</taxon>
        <taxon>Bacillati</taxon>
        <taxon>Actinomycetota</taxon>
        <taxon>Actinomycetes</taxon>
        <taxon>Kitasatosporales</taxon>
        <taxon>Streptomycetaceae</taxon>
        <taxon>Streptomyces</taxon>
    </lineage>
</organism>
<proteinExistence type="inferred from homology"/>
<keyword id="KW-0067">ATP-binding</keyword>
<keyword id="KW-0963">Cytoplasm</keyword>
<keyword id="KW-0227">DNA damage</keyword>
<keyword id="KW-0233">DNA recombination</keyword>
<keyword id="KW-0234">DNA repair</keyword>
<keyword id="KW-0238">DNA-binding</keyword>
<keyword id="KW-0378">Hydrolase</keyword>
<keyword id="KW-0547">Nucleotide-binding</keyword>
<keyword id="KW-1185">Reference proteome</keyword>
<protein>
    <recommendedName>
        <fullName evidence="1">Holliday junction branch migration complex subunit RuvB</fullName>
        <ecNumber evidence="1">3.6.4.-</ecNumber>
    </recommendedName>
</protein>
<dbReference type="EC" id="3.6.4.-" evidence="1"/>
<dbReference type="EMBL" id="BA000030">
    <property type="protein sequence ID" value="BAC74546.1"/>
    <property type="molecule type" value="Genomic_DNA"/>
</dbReference>
<dbReference type="RefSeq" id="WP_010988233.1">
    <property type="nucleotide sequence ID" value="NZ_JZJK01000082.1"/>
</dbReference>
<dbReference type="SMR" id="Q820F3"/>
<dbReference type="GeneID" id="41543910"/>
<dbReference type="KEGG" id="sma:SAVERM_6835"/>
<dbReference type="eggNOG" id="COG2255">
    <property type="taxonomic scope" value="Bacteria"/>
</dbReference>
<dbReference type="HOGENOM" id="CLU_055599_1_0_11"/>
<dbReference type="OrthoDB" id="9804478at2"/>
<dbReference type="Proteomes" id="UP000000428">
    <property type="component" value="Chromosome"/>
</dbReference>
<dbReference type="GO" id="GO:0005737">
    <property type="term" value="C:cytoplasm"/>
    <property type="evidence" value="ECO:0007669"/>
    <property type="project" value="UniProtKB-SubCell"/>
</dbReference>
<dbReference type="GO" id="GO:0048476">
    <property type="term" value="C:Holliday junction resolvase complex"/>
    <property type="evidence" value="ECO:0007669"/>
    <property type="project" value="UniProtKB-UniRule"/>
</dbReference>
<dbReference type="GO" id="GO:0005524">
    <property type="term" value="F:ATP binding"/>
    <property type="evidence" value="ECO:0007669"/>
    <property type="project" value="UniProtKB-UniRule"/>
</dbReference>
<dbReference type="GO" id="GO:0016887">
    <property type="term" value="F:ATP hydrolysis activity"/>
    <property type="evidence" value="ECO:0007669"/>
    <property type="project" value="InterPro"/>
</dbReference>
<dbReference type="GO" id="GO:0000400">
    <property type="term" value="F:four-way junction DNA binding"/>
    <property type="evidence" value="ECO:0007669"/>
    <property type="project" value="UniProtKB-UniRule"/>
</dbReference>
<dbReference type="GO" id="GO:0009378">
    <property type="term" value="F:four-way junction helicase activity"/>
    <property type="evidence" value="ECO:0007669"/>
    <property type="project" value="InterPro"/>
</dbReference>
<dbReference type="GO" id="GO:0006310">
    <property type="term" value="P:DNA recombination"/>
    <property type="evidence" value="ECO:0007669"/>
    <property type="project" value="UniProtKB-UniRule"/>
</dbReference>
<dbReference type="GO" id="GO:0006281">
    <property type="term" value="P:DNA repair"/>
    <property type="evidence" value="ECO:0007669"/>
    <property type="project" value="UniProtKB-UniRule"/>
</dbReference>
<dbReference type="CDD" id="cd00009">
    <property type="entry name" value="AAA"/>
    <property type="match status" value="1"/>
</dbReference>
<dbReference type="Gene3D" id="1.10.8.60">
    <property type="match status" value="1"/>
</dbReference>
<dbReference type="Gene3D" id="3.40.50.300">
    <property type="entry name" value="P-loop containing nucleotide triphosphate hydrolases"/>
    <property type="match status" value="1"/>
</dbReference>
<dbReference type="Gene3D" id="1.10.10.10">
    <property type="entry name" value="Winged helix-like DNA-binding domain superfamily/Winged helix DNA-binding domain"/>
    <property type="match status" value="1"/>
</dbReference>
<dbReference type="HAMAP" id="MF_00016">
    <property type="entry name" value="DNA_HJ_migration_RuvB"/>
    <property type="match status" value="1"/>
</dbReference>
<dbReference type="InterPro" id="IPR003593">
    <property type="entry name" value="AAA+_ATPase"/>
</dbReference>
<dbReference type="InterPro" id="IPR041445">
    <property type="entry name" value="AAA_lid_4"/>
</dbReference>
<dbReference type="InterPro" id="IPR004605">
    <property type="entry name" value="DNA_helicase_Holl-junc_RuvB"/>
</dbReference>
<dbReference type="InterPro" id="IPR027417">
    <property type="entry name" value="P-loop_NTPase"/>
</dbReference>
<dbReference type="InterPro" id="IPR008824">
    <property type="entry name" value="RuvB-like_N"/>
</dbReference>
<dbReference type="InterPro" id="IPR008823">
    <property type="entry name" value="RuvB_C"/>
</dbReference>
<dbReference type="InterPro" id="IPR036388">
    <property type="entry name" value="WH-like_DNA-bd_sf"/>
</dbReference>
<dbReference type="InterPro" id="IPR036390">
    <property type="entry name" value="WH_DNA-bd_sf"/>
</dbReference>
<dbReference type="NCBIfam" id="NF000868">
    <property type="entry name" value="PRK00080.1"/>
    <property type="match status" value="1"/>
</dbReference>
<dbReference type="NCBIfam" id="TIGR00635">
    <property type="entry name" value="ruvB"/>
    <property type="match status" value="1"/>
</dbReference>
<dbReference type="PANTHER" id="PTHR42848">
    <property type="match status" value="1"/>
</dbReference>
<dbReference type="PANTHER" id="PTHR42848:SF1">
    <property type="entry name" value="HOLLIDAY JUNCTION BRANCH MIGRATION COMPLEX SUBUNIT RUVB"/>
    <property type="match status" value="1"/>
</dbReference>
<dbReference type="Pfam" id="PF17864">
    <property type="entry name" value="AAA_lid_4"/>
    <property type="match status" value="1"/>
</dbReference>
<dbReference type="Pfam" id="PF05491">
    <property type="entry name" value="RuvB_C"/>
    <property type="match status" value="1"/>
</dbReference>
<dbReference type="Pfam" id="PF05496">
    <property type="entry name" value="RuvB_N"/>
    <property type="match status" value="1"/>
</dbReference>
<dbReference type="SMART" id="SM00382">
    <property type="entry name" value="AAA"/>
    <property type="match status" value="1"/>
</dbReference>
<dbReference type="SUPFAM" id="SSF52540">
    <property type="entry name" value="P-loop containing nucleoside triphosphate hydrolases"/>
    <property type="match status" value="1"/>
</dbReference>
<dbReference type="SUPFAM" id="SSF46785">
    <property type="entry name" value="Winged helix' DNA-binding domain"/>
    <property type="match status" value="1"/>
</dbReference>
<sequence length="356" mass="38177">MNWDDTTDATADERLVGASADREDQAVEAALRPKDLDEFIGQEKVREQLDLVLRAARARGATSDHVLLSGAPGLGKTTLSMIIAAEMGAPIRITSGPAIQHAGDLAAILSSLQEGEVLFLDEIHRMSRPAEEMLYMAMEDFRVDVIVGKGPGATAIPLELPPFTLVGATTRAGLLPPPLRDRFGFTAHMEFYEPHELERVIHRSAGLLDVEIDSRGAAEIAGRSRGTPRIANRLLRRVRDYAQVKADGVITREIAAAALKVYEVDARGLDRLDRGVLEALLKLFGGGPVGLSTLAVAVGEERETVEEVAEPFLVREGLLARTPRGRVATPAAWAHLGLTPPPRATGGNGQGDLFGA</sequence>
<feature type="chain" id="PRO_0000165604" description="Holliday junction branch migration complex subunit RuvB">
    <location>
        <begin position="1"/>
        <end position="356"/>
    </location>
</feature>
<feature type="region of interest" description="Large ATPase domain (RuvB-L)" evidence="1">
    <location>
        <begin position="4"/>
        <end position="192"/>
    </location>
</feature>
<feature type="region of interest" description="Small ATPAse domain (RuvB-S)" evidence="1">
    <location>
        <begin position="193"/>
        <end position="263"/>
    </location>
</feature>
<feature type="region of interest" description="Head domain (RuvB-H)" evidence="1">
    <location>
        <begin position="266"/>
        <end position="356"/>
    </location>
</feature>
<feature type="binding site" evidence="1">
    <location>
        <position position="31"/>
    </location>
    <ligand>
        <name>ATP</name>
        <dbReference type="ChEBI" id="CHEBI:30616"/>
    </ligand>
</feature>
<feature type="binding site" evidence="1">
    <location>
        <position position="32"/>
    </location>
    <ligand>
        <name>ATP</name>
        <dbReference type="ChEBI" id="CHEBI:30616"/>
    </ligand>
</feature>
<feature type="binding site" evidence="1">
    <location>
        <position position="73"/>
    </location>
    <ligand>
        <name>ATP</name>
        <dbReference type="ChEBI" id="CHEBI:30616"/>
    </ligand>
</feature>
<feature type="binding site" evidence="1">
    <location>
        <position position="76"/>
    </location>
    <ligand>
        <name>ATP</name>
        <dbReference type="ChEBI" id="CHEBI:30616"/>
    </ligand>
</feature>
<feature type="binding site" evidence="1">
    <location>
        <position position="77"/>
    </location>
    <ligand>
        <name>ATP</name>
        <dbReference type="ChEBI" id="CHEBI:30616"/>
    </ligand>
</feature>
<feature type="binding site" evidence="1">
    <location>
        <position position="77"/>
    </location>
    <ligand>
        <name>Mg(2+)</name>
        <dbReference type="ChEBI" id="CHEBI:18420"/>
    </ligand>
</feature>
<feature type="binding site" evidence="1">
    <location>
        <position position="78"/>
    </location>
    <ligand>
        <name>ATP</name>
        <dbReference type="ChEBI" id="CHEBI:30616"/>
    </ligand>
</feature>
<feature type="binding site" evidence="1">
    <location>
        <begin position="139"/>
        <end position="141"/>
    </location>
    <ligand>
        <name>ATP</name>
        <dbReference type="ChEBI" id="CHEBI:30616"/>
    </ligand>
</feature>
<feature type="binding site" evidence="1">
    <location>
        <position position="182"/>
    </location>
    <ligand>
        <name>ATP</name>
        <dbReference type="ChEBI" id="CHEBI:30616"/>
    </ligand>
</feature>
<feature type="binding site" evidence="1">
    <location>
        <position position="192"/>
    </location>
    <ligand>
        <name>ATP</name>
        <dbReference type="ChEBI" id="CHEBI:30616"/>
    </ligand>
</feature>
<feature type="binding site" evidence="1">
    <location>
        <position position="229"/>
    </location>
    <ligand>
        <name>ATP</name>
        <dbReference type="ChEBI" id="CHEBI:30616"/>
    </ligand>
</feature>
<feature type="binding site" evidence="1">
    <location>
        <position position="302"/>
    </location>
    <ligand>
        <name>DNA</name>
        <dbReference type="ChEBI" id="CHEBI:16991"/>
    </ligand>
</feature>
<feature type="binding site" evidence="1">
    <location>
        <position position="321"/>
    </location>
    <ligand>
        <name>DNA</name>
        <dbReference type="ChEBI" id="CHEBI:16991"/>
    </ligand>
</feature>
<feature type="binding site" evidence="1">
    <location>
        <position position="326"/>
    </location>
    <ligand>
        <name>DNA</name>
        <dbReference type="ChEBI" id="CHEBI:16991"/>
    </ligand>
</feature>